<keyword id="KW-0002">3D-structure</keyword>
<keyword id="KW-0012">Acyltransferase</keyword>
<keyword id="KW-1185">Reference proteome</keyword>
<keyword id="KW-0808">Transferase</keyword>
<organism>
    <name type="scientific">Arabidopsis thaliana</name>
    <name type="common">Mouse-ear cress</name>
    <dbReference type="NCBI Taxonomy" id="3702"/>
    <lineage>
        <taxon>Eukaryota</taxon>
        <taxon>Viridiplantae</taxon>
        <taxon>Streptophyta</taxon>
        <taxon>Embryophyta</taxon>
        <taxon>Tracheophyta</taxon>
        <taxon>Spermatophyta</taxon>
        <taxon>Magnoliopsida</taxon>
        <taxon>eudicotyledons</taxon>
        <taxon>Gunneridae</taxon>
        <taxon>Pentapetalae</taxon>
        <taxon>rosids</taxon>
        <taxon>malvids</taxon>
        <taxon>Brassicales</taxon>
        <taxon>Brassicaceae</taxon>
        <taxon>Camelineae</taxon>
        <taxon>Arabidopsis</taxon>
    </lineage>
</organism>
<sequence>MCSSDSLQLHNVFVYGSFQDPDVINVMLDRTPEIVSATLPGFQRFRLKGRLYPCIVPSEKGEVHGKVLMGVTSDELENLDAVEGNEYERVTVGIVREDNSEKMAVKTYMWINKADPDMFGEWNFEEWKRLHKKKFIETFKKIMECKKKPQGQGNDDISHVLREDQ</sequence>
<dbReference type="EC" id="2.3.2.-" evidence="3"/>
<dbReference type="EMBL" id="AB016876">
    <property type="protein sequence ID" value="BAB11378.1"/>
    <property type="molecule type" value="Genomic_DNA"/>
</dbReference>
<dbReference type="EMBL" id="CP002688">
    <property type="protein sequence ID" value="AED94467.1"/>
    <property type="molecule type" value="Genomic_DNA"/>
</dbReference>
<dbReference type="EMBL" id="BT021914">
    <property type="protein sequence ID" value="AAX49363.1"/>
    <property type="molecule type" value="mRNA"/>
</dbReference>
<dbReference type="EMBL" id="AK175964">
    <property type="protein sequence ID" value="BAD43727.1"/>
    <property type="molecule type" value="mRNA"/>
</dbReference>
<dbReference type="PDB" id="2G0Q">
    <property type="method" value="NMR"/>
    <property type="chains" value="A=2-165"/>
</dbReference>
<dbReference type="PDBsum" id="2G0Q"/>
<dbReference type="BMRB" id="Q9FIX2"/>
<dbReference type="SMR" id="Q9FIX2"/>
<dbReference type="FunCoup" id="Q9FIX2">
    <property type="interactions" value="46"/>
</dbReference>
<dbReference type="STRING" id="3702.Q9FIX2"/>
<dbReference type="PaxDb" id="3702-AT5G39720.1"/>
<dbReference type="ProteomicsDB" id="245035"/>
<dbReference type="DNASU" id="833968"/>
<dbReference type="EnsemblPlants" id="AT5G39720.1">
    <property type="protein sequence ID" value="AT5G39720.1"/>
    <property type="gene ID" value="AT5G39720"/>
</dbReference>
<dbReference type="GeneID" id="833968"/>
<dbReference type="Gramene" id="AT5G39720.1">
    <property type="protein sequence ID" value="AT5G39720.1"/>
    <property type="gene ID" value="AT5G39720"/>
</dbReference>
<dbReference type="KEGG" id="ath:AT5G39720"/>
<dbReference type="Araport" id="AT5G39720"/>
<dbReference type="TAIR" id="AT5G39720">
    <property type="gene designation" value="AIG2L"/>
</dbReference>
<dbReference type="eggNOG" id="ENOG502SWGU">
    <property type="taxonomic scope" value="Eukaryota"/>
</dbReference>
<dbReference type="HOGENOM" id="CLU_093936_0_0_1"/>
<dbReference type="InParanoid" id="Q9FIX2"/>
<dbReference type="OMA" id="MECKKKP"/>
<dbReference type="PhylomeDB" id="Q9FIX2"/>
<dbReference type="EvolutionaryTrace" id="Q9FIX2"/>
<dbReference type="PRO" id="PR:Q9FIX2"/>
<dbReference type="Proteomes" id="UP000006548">
    <property type="component" value="Chromosome 5"/>
</dbReference>
<dbReference type="ExpressionAtlas" id="Q9FIX2">
    <property type="expression patterns" value="baseline and differential"/>
</dbReference>
<dbReference type="GO" id="GO:0016746">
    <property type="term" value="F:acyltransferase activity"/>
    <property type="evidence" value="ECO:0007669"/>
    <property type="project" value="UniProtKB-KW"/>
</dbReference>
<dbReference type="CDD" id="cd06661">
    <property type="entry name" value="GGCT_like"/>
    <property type="match status" value="1"/>
</dbReference>
<dbReference type="FunFam" id="3.10.490.10:FF:000022">
    <property type="entry name" value="Protein AIG2 B"/>
    <property type="match status" value="1"/>
</dbReference>
<dbReference type="Gene3D" id="6.10.250.210">
    <property type="match status" value="1"/>
</dbReference>
<dbReference type="Gene3D" id="3.10.490.10">
    <property type="entry name" value="Gamma-glutamyl cyclotransferase-like"/>
    <property type="match status" value="1"/>
</dbReference>
<dbReference type="InterPro" id="IPR045038">
    <property type="entry name" value="AIG2-like"/>
</dbReference>
<dbReference type="InterPro" id="IPR009288">
    <property type="entry name" value="AIG2-like_dom"/>
</dbReference>
<dbReference type="InterPro" id="IPR013024">
    <property type="entry name" value="GGCT-like"/>
</dbReference>
<dbReference type="InterPro" id="IPR036568">
    <property type="entry name" value="GGCT-like_sf"/>
</dbReference>
<dbReference type="PANTHER" id="PTHR31544:SF6">
    <property type="entry name" value="AIG2-LIKE PROTEIN A-RELATED"/>
    <property type="match status" value="1"/>
</dbReference>
<dbReference type="PANTHER" id="PTHR31544">
    <property type="entry name" value="AIG2-LIKE PROTEIN D"/>
    <property type="match status" value="1"/>
</dbReference>
<dbReference type="Pfam" id="PF06094">
    <property type="entry name" value="GGACT"/>
    <property type="match status" value="1"/>
</dbReference>
<dbReference type="SUPFAM" id="SSF110857">
    <property type="entry name" value="Gamma-glutamyl cyclotransferase-like"/>
    <property type="match status" value="1"/>
</dbReference>
<evidence type="ECO:0000250" key="1">
    <source>
        <dbReference type="UniProtKB" id="O75223"/>
    </source>
</evidence>
<evidence type="ECO:0000303" key="2">
    <source>
    </source>
</evidence>
<evidence type="ECO:0000305" key="3"/>
<evidence type="ECO:0000305" key="4">
    <source>
    </source>
</evidence>
<evidence type="ECO:0000312" key="5">
    <source>
        <dbReference type="Araport" id="AT5G39720"/>
    </source>
</evidence>
<evidence type="ECO:0000312" key="6">
    <source>
        <dbReference type="EMBL" id="BAB11378.1"/>
    </source>
</evidence>
<evidence type="ECO:0007829" key="7">
    <source>
        <dbReference type="PDB" id="2G0Q"/>
    </source>
</evidence>
<feature type="chain" id="PRO_0000250588" description="AIG2-like protein A">
    <location>
        <begin position="1"/>
        <end position="165"/>
    </location>
</feature>
<feature type="active site" description="Proton acceptor" evidence="1">
    <location>
        <position position="83"/>
    </location>
</feature>
<feature type="binding site" evidence="1">
    <location>
        <begin position="15"/>
        <end position="20"/>
    </location>
    <ligand>
        <name>substrate</name>
    </ligand>
</feature>
<feature type="sequence conflict" description="In Ref. 3; AAX49363." evidence="3" ref="3">
    <original>IS</original>
    <variation>MA</variation>
    <location>
        <begin position="157"/>
        <end position="158"/>
    </location>
</feature>
<feature type="sequence conflict" description="In Ref. 3; AAX49363." evidence="3" ref="3">
    <location>
        <begin position="159"/>
        <end position="165"/>
    </location>
</feature>
<feature type="strand" evidence="7">
    <location>
        <begin position="7"/>
        <end position="14"/>
    </location>
</feature>
<feature type="helix" evidence="7">
    <location>
        <begin position="17"/>
        <end position="19"/>
    </location>
</feature>
<feature type="helix" evidence="7">
    <location>
        <begin position="21"/>
        <end position="27"/>
    </location>
</feature>
<feature type="strand" evidence="7">
    <location>
        <begin position="33"/>
        <end position="40"/>
    </location>
</feature>
<feature type="strand" evidence="7">
    <location>
        <begin position="49"/>
        <end position="51"/>
    </location>
</feature>
<feature type="strand" evidence="7">
    <location>
        <begin position="62"/>
        <end position="71"/>
    </location>
</feature>
<feature type="helix" evidence="7">
    <location>
        <begin position="73"/>
        <end position="83"/>
    </location>
</feature>
<feature type="turn" evidence="7">
    <location>
        <begin position="84"/>
        <end position="86"/>
    </location>
</feature>
<feature type="strand" evidence="7">
    <location>
        <begin position="87"/>
        <end position="100"/>
    </location>
</feature>
<feature type="strand" evidence="7">
    <location>
        <begin position="102"/>
        <end position="111"/>
    </location>
</feature>
<feature type="strand" evidence="7">
    <location>
        <begin position="116"/>
        <end position="118"/>
    </location>
</feature>
<feature type="helix" evidence="7">
    <location>
        <begin position="123"/>
        <end position="146"/>
    </location>
</feature>
<name>AIGLA_ARATH</name>
<gene>
    <name evidence="3" type="primary">AIG2LA</name>
    <name evidence="5" type="ordered locus">At5g39720</name>
    <name type="ORF">MIJ24.180</name>
    <name type="ORF">MKM21.1</name>
    <name evidence="6" type="ORF">MKM21.3</name>
    <name type="ORF">MKM21_10</name>
</gene>
<comment type="function">
    <text evidence="1">Putative gamma-glutamylcyclotransferase.</text>
</comment>
<comment type="tissue specificity">
    <text evidence="4">Expressed only in seeds.</text>
</comment>
<comment type="developmental stage">
    <text evidence="4">Expressed at the end of flowering and during seed maturation.</text>
</comment>
<comment type="induction">
    <text evidence="4">Not regulated by chemical or biotic treatments.</text>
</comment>
<comment type="similarity">
    <text evidence="3">Belongs to the gamma-glutamylcyclotransferase family.</text>
</comment>
<reference key="1">
    <citation type="journal article" date="1998" name="DNA Res.">
        <title>Structural analysis of Arabidopsis thaliana chromosome 5. VII. Sequence features of the regions of 1,013,767 bp covered by sixteen physically assigned P1 and TAC clones.</title>
        <authorList>
            <person name="Nakamura Y."/>
            <person name="Sato S."/>
            <person name="Asamizu E."/>
            <person name="Kaneko T."/>
            <person name="Kotani H."/>
            <person name="Miyajima N."/>
            <person name="Tabata S."/>
        </authorList>
    </citation>
    <scope>NUCLEOTIDE SEQUENCE [LARGE SCALE GENOMIC DNA]</scope>
    <source>
        <strain>cv. Columbia</strain>
    </source>
</reference>
<reference key="2">
    <citation type="journal article" date="2017" name="Plant J.">
        <title>Araport11: a complete reannotation of the Arabidopsis thaliana reference genome.</title>
        <authorList>
            <person name="Cheng C.Y."/>
            <person name="Krishnakumar V."/>
            <person name="Chan A.P."/>
            <person name="Thibaud-Nissen F."/>
            <person name="Schobel S."/>
            <person name="Town C.D."/>
        </authorList>
    </citation>
    <scope>GENOME REANNOTATION</scope>
    <source>
        <strain>cv. Columbia</strain>
    </source>
</reference>
<reference key="3">
    <citation type="submission" date="2005-03" db="EMBL/GenBank/DDBJ databases">
        <title>Arabidopsis cDNA clones.</title>
        <authorList>
            <person name="Shinn P."/>
            <person name="Chen H."/>
            <person name="Cheuk R.F."/>
            <person name="Kim C.J."/>
            <person name="Ecker J.R."/>
        </authorList>
    </citation>
    <scope>NUCLEOTIDE SEQUENCE [LARGE SCALE MRNA]</scope>
</reference>
<reference key="4">
    <citation type="submission" date="2004-09" db="EMBL/GenBank/DDBJ databases">
        <title>Large-scale analysis of RIKEN Arabidopsis full-length (RAFL) cDNAs.</title>
        <authorList>
            <person name="Totoki Y."/>
            <person name="Seki M."/>
            <person name="Ishida J."/>
            <person name="Nakajima M."/>
            <person name="Enju A."/>
            <person name="Kamiya A."/>
            <person name="Narusaka M."/>
            <person name="Shin-i T."/>
            <person name="Nakagawa M."/>
            <person name="Sakamoto N."/>
            <person name="Oishi K."/>
            <person name="Kohara Y."/>
            <person name="Kobayashi M."/>
            <person name="Toyoda A."/>
            <person name="Sakaki Y."/>
            <person name="Sakurai T."/>
            <person name="Iida K."/>
            <person name="Akiyama K."/>
            <person name="Satou M."/>
            <person name="Toyoda T."/>
            <person name="Konagaya A."/>
            <person name="Carninci P."/>
            <person name="Kawai J."/>
            <person name="Hayashizaki Y."/>
            <person name="Shinozaki K."/>
        </authorList>
    </citation>
    <scope>NUCLEOTIDE SEQUENCE [LARGE SCALE MRNA] OF 104-165</scope>
    <source>
        <strain>cv. Columbia</strain>
    </source>
</reference>
<reference key="5">
    <citation type="journal article" date="2008" name="Proteins">
        <title>Solution structure of At3g28950 from Arabidopsis thaliana.</title>
        <authorList>
            <person name="de la Cruz N.B."/>
            <person name="Peterson F.C."/>
            <person name="Volkman B.F."/>
        </authorList>
    </citation>
    <scope>GENE FAMILY</scope>
</reference>
<reference key="6">
    <citation type="journal article" date="2006" name="Acta Crystallogr. F">
        <title>Solution structure of Arabidopsis thaliana protein At5g39720.1, a member of the AIG2-like protein family.</title>
        <authorList>
            <person name="Lytle B.L."/>
            <person name="Peterson F.C."/>
            <person name="Tyler E.M."/>
            <person name="Newman C.L."/>
            <person name="Vinarov D.A."/>
            <person name="Markley J.L."/>
            <person name="Volkman B.F."/>
        </authorList>
    </citation>
    <scope>STRUCTURE BY NMR OF 2-165</scope>
</reference>
<accession>Q9FIX2</accession>
<accession>Q58CN3</accession>
<accession>Q680A3</accession>
<protein>
    <recommendedName>
        <fullName evidence="3">AIG2-like protein A</fullName>
        <ecNumber evidence="3">2.3.2.-</ecNumber>
    </recommendedName>
    <alternativeName>
        <fullName evidence="2">AIG2-like protein</fullName>
    </alternativeName>
    <alternativeName>
        <fullName evidence="2">Avirulence-induced gene 2-like protein</fullName>
    </alternativeName>
    <alternativeName>
        <fullName evidence="3">Avirulence-induced gene 2-like protein A</fullName>
    </alternativeName>
    <alternativeName>
        <fullName evidence="1">Putative gamma-glutamylcyclotransferase</fullName>
    </alternativeName>
</protein>
<proteinExistence type="evidence at protein level"/>